<organism>
    <name type="scientific">Cereibacter sphaeroides (strain ATCC 17023 / DSM 158 / JCM 6121 / CCUG 31486 / LMG 2827 / NBRC 12203 / NCIMB 8253 / ATH 2.4.1.)</name>
    <name type="common">Rhodobacter sphaeroides</name>
    <dbReference type="NCBI Taxonomy" id="272943"/>
    <lineage>
        <taxon>Bacteria</taxon>
        <taxon>Pseudomonadati</taxon>
        <taxon>Pseudomonadota</taxon>
        <taxon>Alphaproteobacteria</taxon>
        <taxon>Rhodobacterales</taxon>
        <taxon>Paracoccaceae</taxon>
        <taxon>Cereibacter</taxon>
    </lineage>
</organism>
<evidence type="ECO:0000255" key="1">
    <source>
        <dbReference type="HAMAP-Rule" id="MF_01723"/>
    </source>
</evidence>
<protein>
    <recommendedName>
        <fullName evidence="1">Thiamine import ATP-binding protein ThiQ</fullName>
        <ecNumber evidence="1">7.6.2.15</ecNumber>
    </recommendedName>
</protein>
<comment type="function">
    <text evidence="1">Part of the ABC transporter complex ThiBPQ involved in thiamine import. Responsible for energy coupling to the transport system.</text>
</comment>
<comment type="catalytic activity">
    <reaction evidence="1">
        <text>thiamine(out) + ATP + H2O = thiamine(in) + ADP + phosphate + H(+)</text>
        <dbReference type="Rhea" id="RHEA:29811"/>
        <dbReference type="ChEBI" id="CHEBI:15377"/>
        <dbReference type="ChEBI" id="CHEBI:15378"/>
        <dbReference type="ChEBI" id="CHEBI:18385"/>
        <dbReference type="ChEBI" id="CHEBI:30616"/>
        <dbReference type="ChEBI" id="CHEBI:43474"/>
        <dbReference type="ChEBI" id="CHEBI:456216"/>
        <dbReference type="EC" id="7.6.2.15"/>
    </reaction>
</comment>
<comment type="subunit">
    <text evidence="1">The complex is composed of two ATP-binding proteins (ThiQ), two transmembrane proteins (ThiP) and a solute-binding protein (ThiB).</text>
</comment>
<comment type="subcellular location">
    <subcellularLocation>
        <location evidence="1">Cell inner membrane</location>
        <topology evidence="1">Peripheral membrane protein</topology>
    </subcellularLocation>
</comment>
<comment type="similarity">
    <text evidence="1">Belongs to the ABC transporter superfamily. Thiamine importer (TC 3.A.1.19.1) family.</text>
</comment>
<gene>
    <name evidence="1" type="primary">thiQ</name>
    <name type="ordered locus">RHOS4_30040</name>
    <name type="ORF">RSP_1393</name>
</gene>
<feature type="chain" id="PRO_0000274453" description="Thiamine import ATP-binding protein ThiQ">
    <location>
        <begin position="1"/>
        <end position="231"/>
    </location>
</feature>
<feature type="domain" description="ABC transporter" evidence="1">
    <location>
        <begin position="2"/>
        <end position="230"/>
    </location>
</feature>
<feature type="binding site" evidence="1">
    <location>
        <begin position="32"/>
        <end position="39"/>
    </location>
    <ligand>
        <name>ATP</name>
        <dbReference type="ChEBI" id="CHEBI:30616"/>
    </ligand>
</feature>
<accession>Q3IY12</accession>
<sequence>MLHLDRLLIRQGDFTLRADATACAGERIAVIGPSGGGKSTLLMAIAGFLAPAEGRILWQGRDLGPLGPGERQVSLLFQDQNLFPHLTLRENLGLGISPALRLAAGDRARIAEALERVGLAGLGEAKPGRLSGGQQGRAALARALLRARPILLLDEPFAALGPALKAEMLALVSEIAAETGATVLMVTHDPEDARRFAHRTILVADGRAEAPQPTAALFADPPPALRAYLGP</sequence>
<proteinExistence type="inferred from homology"/>
<reference key="1">
    <citation type="submission" date="2005-09" db="EMBL/GenBank/DDBJ databases">
        <title>Complete sequence of chromosome 1 of Rhodobacter sphaeroides 2.4.1.</title>
        <authorList>
            <person name="Copeland A."/>
            <person name="Lucas S."/>
            <person name="Lapidus A."/>
            <person name="Barry K."/>
            <person name="Detter J.C."/>
            <person name="Glavina T."/>
            <person name="Hammon N."/>
            <person name="Israni S."/>
            <person name="Pitluck S."/>
            <person name="Richardson P."/>
            <person name="Mackenzie C."/>
            <person name="Choudhary M."/>
            <person name="Larimer F."/>
            <person name="Hauser L.J."/>
            <person name="Land M."/>
            <person name="Donohue T.J."/>
            <person name="Kaplan S."/>
        </authorList>
    </citation>
    <scope>NUCLEOTIDE SEQUENCE [LARGE SCALE GENOMIC DNA]</scope>
    <source>
        <strain>ATCC 17023 / DSM 158 / JCM 6121 / CCUG 31486 / LMG 2827 / NBRC 12203 / NCIMB 8253 / ATH 2.4.1.</strain>
    </source>
</reference>
<keyword id="KW-0067">ATP-binding</keyword>
<keyword id="KW-0997">Cell inner membrane</keyword>
<keyword id="KW-1003">Cell membrane</keyword>
<keyword id="KW-0472">Membrane</keyword>
<keyword id="KW-0547">Nucleotide-binding</keyword>
<keyword id="KW-1185">Reference proteome</keyword>
<keyword id="KW-1278">Translocase</keyword>
<keyword id="KW-0813">Transport</keyword>
<name>THIQ_CERS4</name>
<dbReference type="EC" id="7.6.2.15" evidence="1"/>
<dbReference type="EMBL" id="CP000143">
    <property type="protein sequence ID" value="ABA80572.1"/>
    <property type="molecule type" value="Genomic_DNA"/>
</dbReference>
<dbReference type="RefSeq" id="WP_011338929.1">
    <property type="nucleotide sequence ID" value="NC_007493.2"/>
</dbReference>
<dbReference type="RefSeq" id="YP_354473.1">
    <property type="nucleotide sequence ID" value="NC_007493.2"/>
</dbReference>
<dbReference type="SMR" id="Q3IY12"/>
<dbReference type="STRING" id="272943.RSP_1393"/>
<dbReference type="EnsemblBacteria" id="ABA80572">
    <property type="protein sequence ID" value="ABA80572"/>
    <property type="gene ID" value="RSP_1393"/>
</dbReference>
<dbReference type="GeneID" id="3720799"/>
<dbReference type="KEGG" id="rsp:RSP_1393"/>
<dbReference type="PATRIC" id="fig|272943.9.peg.3375"/>
<dbReference type="eggNOG" id="COG3840">
    <property type="taxonomic scope" value="Bacteria"/>
</dbReference>
<dbReference type="OrthoDB" id="9802264at2"/>
<dbReference type="PhylomeDB" id="Q3IY12"/>
<dbReference type="Proteomes" id="UP000002703">
    <property type="component" value="Chromosome 1"/>
</dbReference>
<dbReference type="GO" id="GO:0005886">
    <property type="term" value="C:plasma membrane"/>
    <property type="evidence" value="ECO:0007669"/>
    <property type="project" value="UniProtKB-SubCell"/>
</dbReference>
<dbReference type="GO" id="GO:0048502">
    <property type="term" value="F:ABC-type thiamine transporter activity"/>
    <property type="evidence" value="ECO:0007669"/>
    <property type="project" value="UniProtKB-EC"/>
</dbReference>
<dbReference type="GO" id="GO:0005524">
    <property type="term" value="F:ATP binding"/>
    <property type="evidence" value="ECO:0007669"/>
    <property type="project" value="UniProtKB-KW"/>
</dbReference>
<dbReference type="GO" id="GO:0016887">
    <property type="term" value="F:ATP hydrolysis activity"/>
    <property type="evidence" value="ECO:0007669"/>
    <property type="project" value="InterPro"/>
</dbReference>
<dbReference type="Gene3D" id="3.40.50.300">
    <property type="entry name" value="P-loop containing nucleotide triphosphate hydrolases"/>
    <property type="match status" value="1"/>
</dbReference>
<dbReference type="InterPro" id="IPR003593">
    <property type="entry name" value="AAA+_ATPase"/>
</dbReference>
<dbReference type="InterPro" id="IPR050093">
    <property type="entry name" value="ABC_SmlMolc_Importer"/>
</dbReference>
<dbReference type="InterPro" id="IPR003439">
    <property type="entry name" value="ABC_transporter-like_ATP-bd"/>
</dbReference>
<dbReference type="InterPro" id="IPR027417">
    <property type="entry name" value="P-loop_NTPase"/>
</dbReference>
<dbReference type="PANTHER" id="PTHR42781">
    <property type="entry name" value="SPERMIDINE/PUTRESCINE IMPORT ATP-BINDING PROTEIN POTA"/>
    <property type="match status" value="1"/>
</dbReference>
<dbReference type="PANTHER" id="PTHR42781:SF1">
    <property type="entry name" value="THIAMINE IMPORT ATP-BINDING PROTEIN THIQ"/>
    <property type="match status" value="1"/>
</dbReference>
<dbReference type="Pfam" id="PF00005">
    <property type="entry name" value="ABC_tran"/>
    <property type="match status" value="1"/>
</dbReference>
<dbReference type="SMART" id="SM00382">
    <property type="entry name" value="AAA"/>
    <property type="match status" value="1"/>
</dbReference>
<dbReference type="SUPFAM" id="SSF52540">
    <property type="entry name" value="P-loop containing nucleoside triphosphate hydrolases"/>
    <property type="match status" value="1"/>
</dbReference>
<dbReference type="PROSITE" id="PS50893">
    <property type="entry name" value="ABC_TRANSPORTER_2"/>
    <property type="match status" value="1"/>
</dbReference>
<dbReference type="PROSITE" id="PS51288">
    <property type="entry name" value="THIQ"/>
    <property type="match status" value="1"/>
</dbReference>